<sequence length="353" mass="38937">MTAILERRESESLWGRFCNWITSTENRLYIGWFGVLMIPTLLTATSVFIIAFIAAPPVDIDGIREPVSGSLLYGNNIISGAIIPTSAAIGLHFYPIWEAASVDEWLYNGGPYELIVLHFLLGVACYMGREWELSFRLGMRPWIAVAYSAPVAAATAVFLIYPIGQGSFSDGMPLGISGTFNFMIVFQAEHNILMHPFHMLGVAGVFGGSLFSAMHGSLVTSSLIRETTENESANEGYRFGQEEETYNIVAAHGYFGRLIFQYASFNNSRSLHFFLAAWPVVGIWFTALGISTMAFNLNGFNFNQSVVDSQGRVINTWADIINRANLGMEVMHERNAHNFPLDLAAVEAPSTNG</sequence>
<feature type="initiator methionine" description="Removed" evidence="1">
    <location>
        <position position="1"/>
    </location>
</feature>
<feature type="chain" id="PRO_0000090457" description="Photosystem II protein D1" evidence="1">
    <location>
        <begin position="2"/>
        <end position="344"/>
    </location>
</feature>
<feature type="propeptide" id="PRO_0000316467" evidence="1">
    <location>
        <begin position="345"/>
        <end position="353"/>
    </location>
</feature>
<feature type="transmembrane region" description="Helical" evidence="1">
    <location>
        <begin position="29"/>
        <end position="46"/>
    </location>
</feature>
<feature type="transmembrane region" description="Helical" evidence="1">
    <location>
        <begin position="118"/>
        <end position="133"/>
    </location>
</feature>
<feature type="transmembrane region" description="Helical" evidence="1">
    <location>
        <begin position="142"/>
        <end position="156"/>
    </location>
</feature>
<feature type="transmembrane region" description="Helical" evidence="1">
    <location>
        <begin position="197"/>
        <end position="218"/>
    </location>
</feature>
<feature type="transmembrane region" description="Helical" evidence="1">
    <location>
        <begin position="274"/>
        <end position="288"/>
    </location>
</feature>
<feature type="binding site" description="axial binding residue" evidence="1">
    <location>
        <position position="118"/>
    </location>
    <ligand>
        <name>chlorophyll a</name>
        <dbReference type="ChEBI" id="CHEBI:58416"/>
        <label>ChlzD1</label>
    </ligand>
    <ligandPart>
        <name>Mg</name>
        <dbReference type="ChEBI" id="CHEBI:25107"/>
    </ligandPart>
</feature>
<feature type="binding site" evidence="1">
    <location>
        <position position="126"/>
    </location>
    <ligand>
        <name>pheophytin a</name>
        <dbReference type="ChEBI" id="CHEBI:136840"/>
        <label>D1</label>
    </ligand>
</feature>
<feature type="binding site" evidence="1">
    <location>
        <position position="170"/>
    </location>
    <ligand>
        <name>[CaMn4O5] cluster</name>
        <dbReference type="ChEBI" id="CHEBI:189552"/>
    </ligand>
</feature>
<feature type="binding site" evidence="1">
    <location>
        <position position="189"/>
    </location>
    <ligand>
        <name>[CaMn4O5] cluster</name>
        <dbReference type="ChEBI" id="CHEBI:189552"/>
    </ligand>
</feature>
<feature type="binding site" description="axial binding residue" evidence="1">
    <location>
        <position position="198"/>
    </location>
    <ligand>
        <name>chlorophyll a</name>
        <dbReference type="ChEBI" id="CHEBI:58416"/>
        <label>PD1</label>
    </ligand>
    <ligandPart>
        <name>Mg</name>
        <dbReference type="ChEBI" id="CHEBI:25107"/>
    </ligandPart>
</feature>
<feature type="binding site" evidence="1">
    <location>
        <position position="215"/>
    </location>
    <ligand>
        <name>a quinone</name>
        <dbReference type="ChEBI" id="CHEBI:132124"/>
        <label>B</label>
    </ligand>
</feature>
<feature type="binding site" evidence="1">
    <location>
        <position position="215"/>
    </location>
    <ligand>
        <name>Fe cation</name>
        <dbReference type="ChEBI" id="CHEBI:24875"/>
        <note>ligand shared with heterodimeric partner</note>
    </ligand>
</feature>
<feature type="binding site" evidence="1">
    <location>
        <begin position="264"/>
        <end position="265"/>
    </location>
    <ligand>
        <name>a quinone</name>
        <dbReference type="ChEBI" id="CHEBI:132124"/>
        <label>B</label>
    </ligand>
</feature>
<feature type="binding site" evidence="1">
    <location>
        <position position="272"/>
    </location>
    <ligand>
        <name>Fe cation</name>
        <dbReference type="ChEBI" id="CHEBI:24875"/>
        <note>ligand shared with heterodimeric partner</note>
    </ligand>
</feature>
<feature type="binding site" evidence="1">
    <location>
        <position position="332"/>
    </location>
    <ligand>
        <name>[CaMn4O5] cluster</name>
        <dbReference type="ChEBI" id="CHEBI:189552"/>
    </ligand>
</feature>
<feature type="binding site" evidence="1">
    <location>
        <position position="333"/>
    </location>
    <ligand>
        <name>[CaMn4O5] cluster</name>
        <dbReference type="ChEBI" id="CHEBI:189552"/>
    </ligand>
</feature>
<feature type="binding site" evidence="1">
    <location>
        <position position="342"/>
    </location>
    <ligand>
        <name>[CaMn4O5] cluster</name>
        <dbReference type="ChEBI" id="CHEBI:189552"/>
    </ligand>
</feature>
<feature type="binding site" evidence="1">
    <location>
        <position position="344"/>
    </location>
    <ligand>
        <name>[CaMn4O5] cluster</name>
        <dbReference type="ChEBI" id="CHEBI:189552"/>
    </ligand>
</feature>
<feature type="site" description="Tyrosine radical intermediate" evidence="1">
    <location>
        <position position="161"/>
    </location>
</feature>
<feature type="site" description="Stabilizes free radical intermediate" evidence="1">
    <location>
        <position position="190"/>
    </location>
</feature>
<feature type="site" description="Cleavage; by CTPA" evidence="1">
    <location>
        <begin position="344"/>
        <end position="345"/>
    </location>
</feature>
<feature type="modified residue" description="N-acetylthreonine" evidence="1">
    <location>
        <position position="2"/>
    </location>
</feature>
<feature type="modified residue" description="Phosphothreonine" evidence="1">
    <location>
        <position position="2"/>
    </location>
</feature>
<protein>
    <recommendedName>
        <fullName evidence="1">Photosystem II protein D1</fullName>
        <shortName evidence="1">PSII D1 protein</shortName>
        <ecNumber evidence="1">1.10.3.9</ecNumber>
    </recommendedName>
    <alternativeName>
        <fullName evidence="1">Photosystem II Q(B) protein</fullName>
    </alternativeName>
</protein>
<gene>
    <name evidence="1" type="primary">psbA</name>
</gene>
<organism>
    <name type="scientific">Oenothera elata subsp. hookeri</name>
    <name type="common">Hooker's evening primrose</name>
    <name type="synonym">Oenothera hookeri</name>
    <dbReference type="NCBI Taxonomy" id="85636"/>
    <lineage>
        <taxon>Eukaryota</taxon>
        <taxon>Viridiplantae</taxon>
        <taxon>Streptophyta</taxon>
        <taxon>Embryophyta</taxon>
        <taxon>Tracheophyta</taxon>
        <taxon>Spermatophyta</taxon>
        <taxon>Magnoliopsida</taxon>
        <taxon>eudicotyledons</taxon>
        <taxon>Gunneridae</taxon>
        <taxon>Pentapetalae</taxon>
        <taxon>rosids</taxon>
        <taxon>malvids</taxon>
        <taxon>Myrtales</taxon>
        <taxon>Onagraceae</taxon>
        <taxon>Onagroideae</taxon>
        <taxon>Onagreae</taxon>
        <taxon>Oenothera</taxon>
    </lineage>
</organism>
<geneLocation type="chloroplast"/>
<comment type="function">
    <text evidence="1">Photosystem II (PSII) is a light-driven water:plastoquinone oxidoreductase that uses light energy to abstract electrons from H(2)O, generating O(2) and a proton gradient subsequently used for ATP formation. It consists of a core antenna complex that captures photons, and an electron transfer chain that converts photonic excitation into a charge separation. The D1/D2 (PsbA/PsbD) reaction center heterodimer binds P680, the primary electron donor of PSII as well as several subsequent electron acceptors.</text>
</comment>
<comment type="catalytic activity">
    <reaction evidence="1">
        <text>2 a plastoquinone + 4 hnu + 2 H2O = 2 a plastoquinol + O2</text>
        <dbReference type="Rhea" id="RHEA:36359"/>
        <dbReference type="Rhea" id="RHEA-COMP:9561"/>
        <dbReference type="Rhea" id="RHEA-COMP:9562"/>
        <dbReference type="ChEBI" id="CHEBI:15377"/>
        <dbReference type="ChEBI" id="CHEBI:15379"/>
        <dbReference type="ChEBI" id="CHEBI:17757"/>
        <dbReference type="ChEBI" id="CHEBI:30212"/>
        <dbReference type="ChEBI" id="CHEBI:62192"/>
        <dbReference type="EC" id="1.10.3.9"/>
    </reaction>
</comment>
<comment type="cofactor">
    <text evidence="1">The D1/D2 heterodimer binds P680, chlorophylls that are the primary electron donor of PSII, and subsequent electron acceptors. It shares a non-heme iron and each subunit binds pheophytin, quinone, additional chlorophylls, carotenoids and lipids. D1 provides most of the ligands for the Mn4-Ca-O5 cluster of the oxygen-evolving complex (OEC). There is also a Cl(-1) ion associated with D1 and D2, which is required for oxygen evolution. The PSII complex binds additional chlorophylls, carotenoids and specific lipids.</text>
</comment>
<comment type="subunit">
    <text evidence="1">PSII is composed of 1 copy each of membrane proteins PsbA, PsbB, PsbC, PsbD, PsbE, PsbF, PsbH, PsbI, PsbJ, PsbK, PsbL, PsbM, PsbT, PsbX, PsbY, PsbZ, Psb30/Ycf12, at least 3 peripheral proteins of the oxygen-evolving complex and a large number of cofactors. It forms dimeric complexes.</text>
</comment>
<comment type="subcellular location">
    <subcellularLocation>
        <location evidence="1">Plastid</location>
        <location evidence="1">Chloroplast thylakoid membrane</location>
        <topology evidence="1">Multi-pass membrane protein</topology>
    </subcellularLocation>
</comment>
<comment type="PTM">
    <text evidence="1">Tyr-161 forms a radical intermediate that is referred to as redox-active TyrZ, YZ or Y-Z.</text>
</comment>
<comment type="PTM">
    <text evidence="1">C-terminally processed by CTPA; processing is essential to allow assembly of the oxygen-evolving complex and thus photosynthetic growth.</text>
</comment>
<comment type="miscellaneous">
    <text evidence="1">2 of the reaction center chlorophylls (ChlD1 and ChlD2) are entirely coordinated by water.</text>
</comment>
<comment type="miscellaneous">
    <text evidence="1">Herbicides such as atrazine, BNT, diuron or ioxynil bind in the Q(B) binding site and block subsequent electron transfer.</text>
</comment>
<comment type="similarity">
    <text evidence="1">Belongs to the reaction center PufL/M/PsbA/D family.</text>
</comment>
<reference key="1">
    <citation type="journal article" date="2000" name="Mol. Gen. Genet.">
        <title>Complete nucleotide sequence of the Oenothera elata plastid chromosome, representing plastome I of the five distinguishable Euoenothera plastomes.</title>
        <authorList>
            <person name="Hupfer H."/>
            <person name="Swiatek M."/>
            <person name="Hornung S."/>
            <person name="Herrmann R.G."/>
            <person name="Maier R.M."/>
            <person name="Chiu W.-L."/>
            <person name="Sears B."/>
        </authorList>
    </citation>
    <scope>NUCLEOTIDE SEQUENCE [LARGE SCALE GENOMIC DNA]</scope>
    <source>
        <strain>cv. Johansen</strain>
    </source>
</reference>
<accession>P83756</accession>
<accession>Q33592</accession>
<proteinExistence type="inferred from homology"/>
<keyword id="KW-0007">Acetylation</keyword>
<keyword id="KW-0106">Calcium</keyword>
<keyword id="KW-0148">Chlorophyll</keyword>
<keyword id="KW-0150">Chloroplast</keyword>
<keyword id="KW-0157">Chromophore</keyword>
<keyword id="KW-0249">Electron transport</keyword>
<keyword id="KW-0359">Herbicide resistance</keyword>
<keyword id="KW-0408">Iron</keyword>
<keyword id="KW-0460">Magnesium</keyword>
<keyword id="KW-0464">Manganese</keyword>
<keyword id="KW-0472">Membrane</keyword>
<keyword id="KW-0479">Metal-binding</keyword>
<keyword id="KW-0560">Oxidoreductase</keyword>
<keyword id="KW-0597">Phosphoprotein</keyword>
<keyword id="KW-0602">Photosynthesis</keyword>
<keyword id="KW-0604">Photosystem II</keyword>
<keyword id="KW-0934">Plastid</keyword>
<keyword id="KW-0793">Thylakoid</keyword>
<keyword id="KW-0812">Transmembrane</keyword>
<keyword id="KW-1133">Transmembrane helix</keyword>
<keyword id="KW-0813">Transport</keyword>
<evidence type="ECO:0000255" key="1">
    <source>
        <dbReference type="HAMAP-Rule" id="MF_01379"/>
    </source>
</evidence>
<dbReference type="EC" id="1.10.3.9" evidence="1"/>
<dbReference type="EMBL" id="AJ271079">
    <property type="protein sequence ID" value="CAB67123.1"/>
    <property type="molecule type" value="Genomic_DNA"/>
</dbReference>
<dbReference type="RefSeq" id="NP_084658.1">
    <property type="nucleotide sequence ID" value="NC_002693.2"/>
</dbReference>
<dbReference type="SMR" id="P83756"/>
<dbReference type="GeneID" id="802725"/>
<dbReference type="GO" id="GO:0009535">
    <property type="term" value="C:chloroplast thylakoid membrane"/>
    <property type="evidence" value="ECO:0007669"/>
    <property type="project" value="UniProtKB-SubCell"/>
</dbReference>
<dbReference type="GO" id="GO:0009523">
    <property type="term" value="C:photosystem II"/>
    <property type="evidence" value="ECO:0007669"/>
    <property type="project" value="UniProtKB-KW"/>
</dbReference>
<dbReference type="GO" id="GO:0016168">
    <property type="term" value="F:chlorophyll binding"/>
    <property type="evidence" value="ECO:0007669"/>
    <property type="project" value="UniProtKB-UniRule"/>
</dbReference>
<dbReference type="GO" id="GO:0045156">
    <property type="term" value="F:electron transporter, transferring electrons within the cyclic electron transport pathway of photosynthesis activity"/>
    <property type="evidence" value="ECO:0007669"/>
    <property type="project" value="InterPro"/>
</dbReference>
<dbReference type="GO" id="GO:0005506">
    <property type="term" value="F:iron ion binding"/>
    <property type="evidence" value="ECO:0007669"/>
    <property type="project" value="UniProtKB-UniRule"/>
</dbReference>
<dbReference type="GO" id="GO:0016682">
    <property type="term" value="F:oxidoreductase activity, acting on diphenols and related substances as donors, oxygen as acceptor"/>
    <property type="evidence" value="ECO:0007669"/>
    <property type="project" value="UniProtKB-UniRule"/>
</dbReference>
<dbReference type="GO" id="GO:0010242">
    <property type="term" value="F:oxygen evolving activity"/>
    <property type="evidence" value="ECO:0007669"/>
    <property type="project" value="UniProtKB-EC"/>
</dbReference>
<dbReference type="GO" id="GO:0009772">
    <property type="term" value="P:photosynthetic electron transport in photosystem II"/>
    <property type="evidence" value="ECO:0007669"/>
    <property type="project" value="InterPro"/>
</dbReference>
<dbReference type="GO" id="GO:0009635">
    <property type="term" value="P:response to herbicide"/>
    <property type="evidence" value="ECO:0007669"/>
    <property type="project" value="UniProtKB-KW"/>
</dbReference>
<dbReference type="CDD" id="cd09289">
    <property type="entry name" value="Photosystem-II_D1"/>
    <property type="match status" value="1"/>
</dbReference>
<dbReference type="FunFam" id="1.20.85.10:FF:000002">
    <property type="entry name" value="Photosystem II protein D1"/>
    <property type="match status" value="1"/>
</dbReference>
<dbReference type="Gene3D" id="1.20.85.10">
    <property type="entry name" value="Photosystem II protein D1-like"/>
    <property type="match status" value="1"/>
</dbReference>
<dbReference type="HAMAP" id="MF_01379">
    <property type="entry name" value="PSII_PsbA_D1"/>
    <property type="match status" value="1"/>
</dbReference>
<dbReference type="InterPro" id="IPR055266">
    <property type="entry name" value="D1/D2"/>
</dbReference>
<dbReference type="InterPro" id="IPR036854">
    <property type="entry name" value="Photo_II_D1/D2_sf"/>
</dbReference>
<dbReference type="InterPro" id="IPR000484">
    <property type="entry name" value="Photo_RC_L/M"/>
</dbReference>
<dbReference type="InterPro" id="IPR055265">
    <property type="entry name" value="Photo_RC_L/M_CS"/>
</dbReference>
<dbReference type="InterPro" id="IPR005867">
    <property type="entry name" value="PSII_D1"/>
</dbReference>
<dbReference type="NCBIfam" id="TIGR01151">
    <property type="entry name" value="psbA"/>
    <property type="match status" value="1"/>
</dbReference>
<dbReference type="PANTHER" id="PTHR33149:SF12">
    <property type="entry name" value="PHOTOSYSTEM II D2 PROTEIN"/>
    <property type="match status" value="1"/>
</dbReference>
<dbReference type="PANTHER" id="PTHR33149">
    <property type="entry name" value="PHOTOSYSTEM II PROTEIN D1"/>
    <property type="match status" value="1"/>
</dbReference>
<dbReference type="Pfam" id="PF00124">
    <property type="entry name" value="Photo_RC"/>
    <property type="match status" value="1"/>
</dbReference>
<dbReference type="PRINTS" id="PR00256">
    <property type="entry name" value="REACTNCENTRE"/>
</dbReference>
<dbReference type="SUPFAM" id="SSF81483">
    <property type="entry name" value="Bacterial photosystem II reaction centre, L and M subunits"/>
    <property type="match status" value="1"/>
</dbReference>
<dbReference type="PROSITE" id="PS00244">
    <property type="entry name" value="REACTION_CENTER"/>
    <property type="match status" value="1"/>
</dbReference>
<name>PSBA_OENEH</name>